<keyword id="KW-0158">Chromosome</keyword>
<keyword id="KW-0217">Developmental protein</keyword>
<keyword id="KW-0221">Differentiation</keyword>
<keyword id="KW-0903">Direct protein sequencing</keyword>
<keyword id="KW-0226">DNA condensation</keyword>
<keyword id="KW-0238">DNA-binding</keyword>
<keyword id="KW-0544">Nucleosome core</keyword>
<keyword id="KW-0539">Nucleus</keyword>
<keyword id="KW-1185">Reference proteome</keyword>
<keyword id="KW-0744">Spermatogenesis</keyword>
<accession>P83215</accession>
<sequence>RRRRRRRRHRRRRGRRGRRSRGRR</sequence>
<dbReference type="Proteomes" id="UP000515154">
    <property type="component" value="Unplaced"/>
</dbReference>
<dbReference type="GO" id="GO:0000786">
    <property type="term" value="C:nucleosome"/>
    <property type="evidence" value="ECO:0007669"/>
    <property type="project" value="UniProtKB-KW"/>
</dbReference>
<dbReference type="GO" id="GO:0005634">
    <property type="term" value="C:nucleus"/>
    <property type="evidence" value="ECO:0007669"/>
    <property type="project" value="UniProtKB-SubCell"/>
</dbReference>
<dbReference type="GO" id="GO:0003677">
    <property type="term" value="F:DNA binding"/>
    <property type="evidence" value="ECO:0007669"/>
    <property type="project" value="UniProtKB-KW"/>
</dbReference>
<dbReference type="GO" id="GO:0030154">
    <property type="term" value="P:cell differentiation"/>
    <property type="evidence" value="ECO:0007669"/>
    <property type="project" value="UniProtKB-KW"/>
</dbReference>
<dbReference type="GO" id="GO:0030261">
    <property type="term" value="P:chromosome condensation"/>
    <property type="evidence" value="ECO:0007669"/>
    <property type="project" value="UniProtKB-KW"/>
</dbReference>
<dbReference type="GO" id="GO:0007283">
    <property type="term" value="P:spermatogenesis"/>
    <property type="evidence" value="ECO:0007669"/>
    <property type="project" value="UniProtKB-KW"/>
</dbReference>
<proteinExistence type="evidence at protein level"/>
<reference key="1">
    <citation type="journal article" date="2004" name="Mol. Reprod. Dev.">
        <title>Chromatin organization during spermiogenesis in Octopus vulgaris. II: DNA-interacting proteins.</title>
        <authorList>
            <person name="Gimenez-Bonafe P."/>
            <person name="Soler F.M."/>
            <person name="Buesa C."/>
            <person name="Sautiere P.-E."/>
            <person name="Ausio J."/>
            <person name="Kouach M."/>
            <person name="Kasinsky H.E."/>
            <person name="Chiva M."/>
        </authorList>
    </citation>
    <scope>PROTEIN SEQUENCE</scope>
    <scope>FUNCTION</scope>
    <scope>MASS SPECTROMETRY</scope>
    <source>
        <tissue>Sperm</tissue>
    </source>
</reference>
<name>HSP3_OCTVU</name>
<organism evidence="3">
    <name type="scientific">Octopus vulgaris</name>
    <name type="common">Common octopus</name>
    <dbReference type="NCBI Taxonomy" id="6645"/>
    <lineage>
        <taxon>Eukaryota</taxon>
        <taxon>Metazoa</taxon>
        <taxon>Spiralia</taxon>
        <taxon>Lophotrochozoa</taxon>
        <taxon>Mollusca</taxon>
        <taxon>Cephalopoda</taxon>
        <taxon>Coleoidea</taxon>
        <taxon>Octopodiformes</taxon>
        <taxon>Octopoda</taxon>
        <taxon>Incirrata</taxon>
        <taxon>Octopodidae</taxon>
        <taxon>Octopus</taxon>
    </lineage>
</organism>
<evidence type="ECO:0000256" key="1">
    <source>
        <dbReference type="SAM" id="MobiDB-lite"/>
    </source>
</evidence>
<evidence type="ECO:0000269" key="2">
    <source>
    </source>
</evidence>
<evidence type="ECO:0000305" key="3"/>
<feature type="chain" id="PRO_0000106643" description="Sperm protamine P3">
    <location>
        <begin position="1"/>
        <end position="24" status="greater than"/>
    </location>
</feature>
<feature type="region of interest" description="Disordered" evidence="1">
    <location>
        <begin position="1"/>
        <end position="24"/>
    </location>
</feature>
<feature type="non-terminal residue" evidence="3">
    <location>
        <position position="24"/>
    </location>
</feature>
<protein>
    <recommendedName>
        <fullName>Sperm protamine P3</fullName>
        <shortName>Po3</shortName>
    </recommendedName>
</protein>
<comment type="function">
    <text evidence="2 3">Protamines substitute for histones in the chromatin of sperm during the haploid phase of spermatogenesis. They compact sperm DNA into a highly condensed, stable and inactive complex.</text>
</comment>
<comment type="subcellular location">
    <subcellularLocation>
        <location>Nucleus</location>
    </subcellularLocation>
    <subcellularLocation>
        <location>Chromosome</location>
    </subcellularLocation>
</comment>
<comment type="tissue specificity">
    <text evidence="3">Testis.</text>
</comment>
<comment type="mass spectrometry"/>